<organism>
    <name type="scientific">Roseiflexus sp. (strain RS-1)</name>
    <dbReference type="NCBI Taxonomy" id="357808"/>
    <lineage>
        <taxon>Bacteria</taxon>
        <taxon>Bacillati</taxon>
        <taxon>Chloroflexota</taxon>
        <taxon>Chloroflexia</taxon>
        <taxon>Chloroflexales</taxon>
        <taxon>Roseiflexineae</taxon>
        <taxon>Roseiflexaceae</taxon>
        <taxon>Roseiflexus</taxon>
    </lineage>
</organism>
<comment type="function">
    <text evidence="1">Catalyzes the reversible oxidation of malate to oxaloacetate.</text>
</comment>
<comment type="catalytic activity">
    <reaction evidence="1">
        <text>(S)-malate + NAD(+) = oxaloacetate + NADH + H(+)</text>
        <dbReference type="Rhea" id="RHEA:21432"/>
        <dbReference type="ChEBI" id="CHEBI:15378"/>
        <dbReference type="ChEBI" id="CHEBI:15589"/>
        <dbReference type="ChEBI" id="CHEBI:16452"/>
        <dbReference type="ChEBI" id="CHEBI:57540"/>
        <dbReference type="ChEBI" id="CHEBI:57945"/>
        <dbReference type="EC" id="1.1.1.37"/>
    </reaction>
</comment>
<comment type="similarity">
    <text evidence="1">Belongs to the LDH/MDH superfamily. MDH type 3 family.</text>
</comment>
<feature type="chain" id="PRO_1000191657" description="Malate dehydrogenase">
    <location>
        <begin position="1"/>
        <end position="309"/>
    </location>
</feature>
<feature type="active site" description="Proton acceptor" evidence="1">
    <location>
        <position position="175"/>
    </location>
</feature>
<feature type="binding site" evidence="1">
    <location>
        <begin position="9"/>
        <end position="14"/>
    </location>
    <ligand>
        <name>NAD(+)</name>
        <dbReference type="ChEBI" id="CHEBI:57540"/>
    </ligand>
</feature>
<feature type="binding site" evidence="1">
    <location>
        <position position="33"/>
    </location>
    <ligand>
        <name>NAD(+)</name>
        <dbReference type="ChEBI" id="CHEBI:57540"/>
    </ligand>
</feature>
<feature type="binding site" evidence="1">
    <location>
        <position position="82"/>
    </location>
    <ligand>
        <name>substrate</name>
    </ligand>
</feature>
<feature type="binding site" evidence="1">
    <location>
        <position position="88"/>
    </location>
    <ligand>
        <name>substrate</name>
    </ligand>
</feature>
<feature type="binding site" evidence="1">
    <location>
        <position position="95"/>
    </location>
    <ligand>
        <name>NAD(+)</name>
        <dbReference type="ChEBI" id="CHEBI:57540"/>
    </ligand>
</feature>
<feature type="binding site" evidence="1">
    <location>
        <begin position="118"/>
        <end position="120"/>
    </location>
    <ligand>
        <name>NAD(+)</name>
        <dbReference type="ChEBI" id="CHEBI:57540"/>
    </ligand>
</feature>
<feature type="binding site" evidence="1">
    <location>
        <position position="120"/>
    </location>
    <ligand>
        <name>substrate</name>
    </ligand>
</feature>
<feature type="binding site" evidence="1">
    <location>
        <position position="151"/>
    </location>
    <ligand>
        <name>substrate</name>
    </ligand>
</feature>
<protein>
    <recommendedName>
        <fullName evidence="1">Malate dehydrogenase</fullName>
        <ecNumber evidence="1">1.1.1.37</ecNumber>
    </recommendedName>
</protein>
<keyword id="KW-0520">NAD</keyword>
<keyword id="KW-0560">Oxidoreductase</keyword>
<keyword id="KW-0816">Tricarboxylic acid cycle</keyword>
<name>MDH_ROSS1</name>
<dbReference type="EC" id="1.1.1.37" evidence="1"/>
<dbReference type="EMBL" id="CP000686">
    <property type="protein sequence ID" value="ABQ88689.1"/>
    <property type="molecule type" value="Genomic_DNA"/>
</dbReference>
<dbReference type="RefSeq" id="WP_011955047.1">
    <property type="nucleotide sequence ID" value="NC_009523.1"/>
</dbReference>
<dbReference type="SMR" id="A5UPY6"/>
<dbReference type="STRING" id="357808.RoseRS_0253"/>
<dbReference type="KEGG" id="rrs:RoseRS_0253"/>
<dbReference type="eggNOG" id="COG0039">
    <property type="taxonomic scope" value="Bacteria"/>
</dbReference>
<dbReference type="HOGENOM" id="CLU_045401_2_1_0"/>
<dbReference type="OrthoDB" id="9802969at2"/>
<dbReference type="Proteomes" id="UP000006554">
    <property type="component" value="Chromosome"/>
</dbReference>
<dbReference type="GO" id="GO:0004459">
    <property type="term" value="F:L-lactate dehydrogenase activity"/>
    <property type="evidence" value="ECO:0007669"/>
    <property type="project" value="TreeGrafter"/>
</dbReference>
<dbReference type="GO" id="GO:0030060">
    <property type="term" value="F:L-malate dehydrogenase (NAD+) activity"/>
    <property type="evidence" value="ECO:0007669"/>
    <property type="project" value="UniProtKB-UniRule"/>
</dbReference>
<dbReference type="GO" id="GO:0006089">
    <property type="term" value="P:lactate metabolic process"/>
    <property type="evidence" value="ECO:0007669"/>
    <property type="project" value="TreeGrafter"/>
</dbReference>
<dbReference type="GO" id="GO:0006099">
    <property type="term" value="P:tricarboxylic acid cycle"/>
    <property type="evidence" value="ECO:0007669"/>
    <property type="project" value="UniProtKB-UniRule"/>
</dbReference>
<dbReference type="CDD" id="cd01339">
    <property type="entry name" value="LDH-like_MDH"/>
    <property type="match status" value="1"/>
</dbReference>
<dbReference type="FunFam" id="3.40.50.720:FF:000018">
    <property type="entry name" value="Malate dehydrogenase"/>
    <property type="match status" value="1"/>
</dbReference>
<dbReference type="FunFam" id="3.90.110.10:FF:000004">
    <property type="entry name" value="Malate dehydrogenase"/>
    <property type="match status" value="1"/>
</dbReference>
<dbReference type="Gene3D" id="3.90.110.10">
    <property type="entry name" value="Lactate dehydrogenase/glycoside hydrolase, family 4, C-terminal"/>
    <property type="match status" value="1"/>
</dbReference>
<dbReference type="Gene3D" id="3.40.50.720">
    <property type="entry name" value="NAD(P)-binding Rossmann-like Domain"/>
    <property type="match status" value="1"/>
</dbReference>
<dbReference type="HAMAP" id="MF_00487">
    <property type="entry name" value="Malate_dehydrog_3"/>
    <property type="match status" value="1"/>
</dbReference>
<dbReference type="InterPro" id="IPR001557">
    <property type="entry name" value="L-lactate/malate_DH"/>
</dbReference>
<dbReference type="InterPro" id="IPR022383">
    <property type="entry name" value="Lactate/malate_DH_C"/>
</dbReference>
<dbReference type="InterPro" id="IPR001236">
    <property type="entry name" value="Lactate/malate_DH_N"/>
</dbReference>
<dbReference type="InterPro" id="IPR015955">
    <property type="entry name" value="Lactate_DH/Glyco_Ohase_4_C"/>
</dbReference>
<dbReference type="InterPro" id="IPR011275">
    <property type="entry name" value="Malate_DH_type3"/>
</dbReference>
<dbReference type="InterPro" id="IPR036291">
    <property type="entry name" value="NAD(P)-bd_dom_sf"/>
</dbReference>
<dbReference type="NCBIfam" id="TIGR01763">
    <property type="entry name" value="MalateDH_bact"/>
    <property type="match status" value="1"/>
</dbReference>
<dbReference type="NCBIfam" id="NF004863">
    <property type="entry name" value="PRK06223.1"/>
    <property type="match status" value="1"/>
</dbReference>
<dbReference type="PANTHER" id="PTHR43128">
    <property type="entry name" value="L-2-HYDROXYCARBOXYLATE DEHYDROGENASE (NAD(P)(+))"/>
    <property type="match status" value="1"/>
</dbReference>
<dbReference type="PANTHER" id="PTHR43128:SF16">
    <property type="entry name" value="L-LACTATE DEHYDROGENASE"/>
    <property type="match status" value="1"/>
</dbReference>
<dbReference type="Pfam" id="PF02866">
    <property type="entry name" value="Ldh_1_C"/>
    <property type="match status" value="1"/>
</dbReference>
<dbReference type="Pfam" id="PF00056">
    <property type="entry name" value="Ldh_1_N"/>
    <property type="match status" value="1"/>
</dbReference>
<dbReference type="PIRSF" id="PIRSF000102">
    <property type="entry name" value="Lac_mal_DH"/>
    <property type="match status" value="1"/>
</dbReference>
<dbReference type="PRINTS" id="PR00086">
    <property type="entry name" value="LLDHDRGNASE"/>
</dbReference>
<dbReference type="SUPFAM" id="SSF56327">
    <property type="entry name" value="LDH C-terminal domain-like"/>
    <property type="match status" value="1"/>
</dbReference>
<dbReference type="SUPFAM" id="SSF51735">
    <property type="entry name" value="NAD(P)-binding Rossmann-fold domains"/>
    <property type="match status" value="1"/>
</dbReference>
<gene>
    <name evidence="1" type="primary">mdh</name>
    <name type="ordered locus">RoseRS_0253</name>
</gene>
<reference key="1">
    <citation type="submission" date="2007-04" db="EMBL/GenBank/DDBJ databases">
        <title>Complete sequence of Roseiflexus sp. RS-1.</title>
        <authorList>
            <consortium name="US DOE Joint Genome Institute"/>
            <person name="Copeland A."/>
            <person name="Lucas S."/>
            <person name="Lapidus A."/>
            <person name="Barry K."/>
            <person name="Detter J.C."/>
            <person name="Glavina del Rio T."/>
            <person name="Hammon N."/>
            <person name="Israni S."/>
            <person name="Dalin E."/>
            <person name="Tice H."/>
            <person name="Pitluck S."/>
            <person name="Chertkov O."/>
            <person name="Brettin T."/>
            <person name="Bruce D."/>
            <person name="Han C."/>
            <person name="Schmutz J."/>
            <person name="Larimer F."/>
            <person name="Land M."/>
            <person name="Hauser L."/>
            <person name="Kyrpides N."/>
            <person name="Mikhailova N."/>
            <person name="Bryant D.A."/>
            <person name="Richardson P."/>
        </authorList>
    </citation>
    <scope>NUCLEOTIDE SEQUENCE [LARGE SCALE GENOMIC DNA]</scope>
    <source>
        <strain>RS-1</strain>
    </source>
</reference>
<proteinExistence type="inferred from homology"/>
<sequence>MRPKISIIGAGFVGSTAAHWIASKELGDVVLVDIIEGVPQGKGLDLLQAGPIEGFDVKITGTNDYSATAGSDIIVVTSGAPRKPGMSREDLIRVNADITRDCISKAAPLSPNAIIIMVNNPLDTMTYLAKQVSGFPKNRVVGQAGVLDTARYRTFIAMEAGVSVEDIQAMLMGGHGDEMVPLPRFTTISGIPVTEFISKERLDAIVDRTRKGGGEIVNLLKTGSAYYAPSAATVQMVEAILRDKKRVLPCSCYLEGEYGLNDIYFGVPCVLGAGGVERVLELPLNDEEMALVKKSAEAVSSSIAALKAM</sequence>
<accession>A5UPY6</accession>
<evidence type="ECO:0000255" key="1">
    <source>
        <dbReference type="HAMAP-Rule" id="MF_00487"/>
    </source>
</evidence>